<protein>
    <recommendedName>
        <fullName evidence="1">Glutathione-regulated potassium-efflux system ancillary protein KefG</fullName>
    </recommendedName>
    <alternativeName>
        <fullName evidence="1">Putative quinone oxidoreductase KefG</fullName>
        <ecNumber evidence="1">1.6.5.2</ecNumber>
    </alternativeName>
</protein>
<feature type="chain" id="PRO_1000068481" description="Glutathione-regulated potassium-efflux system ancillary protein KefG">
    <location>
        <begin position="1"/>
        <end position="183"/>
    </location>
</feature>
<dbReference type="EC" id="1.6.5.2" evidence="1"/>
<dbReference type="EMBL" id="AE017220">
    <property type="protein sequence ID" value="AAX67298.1"/>
    <property type="molecule type" value="Genomic_DNA"/>
</dbReference>
<dbReference type="RefSeq" id="WP_000081820.1">
    <property type="nucleotide sequence ID" value="NC_006905.1"/>
</dbReference>
<dbReference type="SMR" id="Q57J14"/>
<dbReference type="KEGG" id="sec:SCH_3392"/>
<dbReference type="HOGENOM" id="CLU_058643_0_1_6"/>
<dbReference type="Proteomes" id="UP000000538">
    <property type="component" value="Chromosome"/>
</dbReference>
<dbReference type="GO" id="GO:0005886">
    <property type="term" value="C:plasma membrane"/>
    <property type="evidence" value="ECO:0007669"/>
    <property type="project" value="UniProtKB-SubCell"/>
</dbReference>
<dbReference type="GO" id="GO:0009055">
    <property type="term" value="F:electron transfer activity"/>
    <property type="evidence" value="ECO:0007669"/>
    <property type="project" value="TreeGrafter"/>
</dbReference>
<dbReference type="GO" id="GO:0010181">
    <property type="term" value="F:FMN binding"/>
    <property type="evidence" value="ECO:0007669"/>
    <property type="project" value="TreeGrafter"/>
</dbReference>
<dbReference type="GO" id="GO:0050136">
    <property type="term" value="F:NADH:ubiquinone reductase (non-electrogenic) activity"/>
    <property type="evidence" value="ECO:0007669"/>
    <property type="project" value="RHEA"/>
</dbReference>
<dbReference type="GO" id="GO:0008753">
    <property type="term" value="F:NADPH dehydrogenase (quinone) activity"/>
    <property type="evidence" value="ECO:0007669"/>
    <property type="project" value="RHEA"/>
</dbReference>
<dbReference type="GO" id="GO:1901381">
    <property type="term" value="P:positive regulation of potassium ion transmembrane transport"/>
    <property type="evidence" value="ECO:0007669"/>
    <property type="project" value="UniProtKB-UniRule"/>
</dbReference>
<dbReference type="GO" id="GO:0006813">
    <property type="term" value="P:potassium ion transport"/>
    <property type="evidence" value="ECO:0007669"/>
    <property type="project" value="InterPro"/>
</dbReference>
<dbReference type="FunFam" id="3.40.50.360:FF:000013">
    <property type="entry name" value="Glutathione-regulated potassium-efflux system ancillary protein KefG"/>
    <property type="match status" value="1"/>
</dbReference>
<dbReference type="Gene3D" id="3.40.50.360">
    <property type="match status" value="1"/>
</dbReference>
<dbReference type="HAMAP" id="MF_01415">
    <property type="entry name" value="K_H_efflux_KefG"/>
    <property type="match status" value="1"/>
</dbReference>
<dbReference type="InterPro" id="IPR003680">
    <property type="entry name" value="Flavodoxin_fold"/>
</dbReference>
<dbReference type="InterPro" id="IPR029039">
    <property type="entry name" value="Flavoprotein-like_sf"/>
</dbReference>
<dbReference type="InterPro" id="IPR023947">
    <property type="entry name" value="K_H_efflux_KefG"/>
</dbReference>
<dbReference type="InterPro" id="IPR046980">
    <property type="entry name" value="KefG/KefF"/>
</dbReference>
<dbReference type="NCBIfam" id="NF003430">
    <property type="entry name" value="PRK04930.1"/>
    <property type="match status" value="1"/>
</dbReference>
<dbReference type="PANTHER" id="PTHR47307">
    <property type="entry name" value="GLUTATHIONE-REGULATED POTASSIUM-EFFLUX SYSTEM ANCILLARY PROTEIN KEFG"/>
    <property type="match status" value="1"/>
</dbReference>
<dbReference type="PANTHER" id="PTHR47307:SF1">
    <property type="entry name" value="GLUTATHIONE-REGULATED POTASSIUM-EFFLUX SYSTEM ANCILLARY PROTEIN KEFG"/>
    <property type="match status" value="1"/>
</dbReference>
<dbReference type="Pfam" id="PF02525">
    <property type="entry name" value="Flavodoxin_2"/>
    <property type="match status" value="1"/>
</dbReference>
<dbReference type="SUPFAM" id="SSF52218">
    <property type="entry name" value="Flavoproteins"/>
    <property type="match status" value="1"/>
</dbReference>
<keyword id="KW-0997">Cell inner membrane</keyword>
<keyword id="KW-1003">Cell membrane</keyword>
<keyword id="KW-0472">Membrane</keyword>
<keyword id="KW-0520">NAD</keyword>
<keyword id="KW-0560">Oxidoreductase</keyword>
<evidence type="ECO:0000255" key="1">
    <source>
        <dbReference type="HAMAP-Rule" id="MF_01415"/>
    </source>
</evidence>
<name>KEFG_SALCH</name>
<gene>
    <name evidence="1" type="primary">kefG</name>
    <name type="ordered locus">SCH_3392</name>
</gene>
<reference key="1">
    <citation type="journal article" date="2005" name="Nucleic Acids Res.">
        <title>The genome sequence of Salmonella enterica serovar Choleraesuis, a highly invasive and resistant zoonotic pathogen.</title>
        <authorList>
            <person name="Chiu C.-H."/>
            <person name="Tang P."/>
            <person name="Chu C."/>
            <person name="Hu S."/>
            <person name="Bao Q."/>
            <person name="Yu J."/>
            <person name="Chou Y.-Y."/>
            <person name="Wang H.-S."/>
            <person name="Lee Y.-S."/>
        </authorList>
    </citation>
    <scope>NUCLEOTIDE SEQUENCE [LARGE SCALE GENOMIC DNA]</scope>
    <source>
        <strain>SC-B67</strain>
    </source>
</reference>
<sequence length="183" mass="20927">MSQPAKVLLLYAHPESQDSVANRVLLKPAIQHNNVTVHDLYARYPDFFIDTPYEQALLREHDVIVFQHPLYTYSCPALLKEWLDRVLSRGFASGPGGNQLVGKYWRSVITTGEPESAYRYDALNRYPMSDVLRPFELTAAMCRMHWMPPIIVYWARRQSPQTLASHAKAYGEWLANPVSAGGY</sequence>
<comment type="function">
    <text evidence="1">Regulatory subunit of a potassium efflux system that confers protection against electrophiles. Required for full activity of KefB.</text>
</comment>
<comment type="catalytic activity">
    <reaction evidence="1">
        <text>a quinone + NADH + H(+) = a quinol + NAD(+)</text>
        <dbReference type="Rhea" id="RHEA:46160"/>
        <dbReference type="ChEBI" id="CHEBI:15378"/>
        <dbReference type="ChEBI" id="CHEBI:24646"/>
        <dbReference type="ChEBI" id="CHEBI:57540"/>
        <dbReference type="ChEBI" id="CHEBI:57945"/>
        <dbReference type="ChEBI" id="CHEBI:132124"/>
        <dbReference type="EC" id="1.6.5.2"/>
    </reaction>
</comment>
<comment type="catalytic activity">
    <reaction evidence="1">
        <text>a quinone + NADPH + H(+) = a quinol + NADP(+)</text>
        <dbReference type="Rhea" id="RHEA:46164"/>
        <dbReference type="ChEBI" id="CHEBI:15378"/>
        <dbReference type="ChEBI" id="CHEBI:24646"/>
        <dbReference type="ChEBI" id="CHEBI:57783"/>
        <dbReference type="ChEBI" id="CHEBI:58349"/>
        <dbReference type="ChEBI" id="CHEBI:132124"/>
        <dbReference type="EC" id="1.6.5.2"/>
    </reaction>
</comment>
<comment type="subunit">
    <text evidence="1">Interacts with KefB.</text>
</comment>
<comment type="subcellular location">
    <subcellularLocation>
        <location evidence="1">Cell inner membrane</location>
        <topology evidence="1">Peripheral membrane protein</topology>
        <orientation evidence="1">Cytoplasmic side</orientation>
    </subcellularLocation>
</comment>
<comment type="similarity">
    <text evidence="1">Belongs to the NAD(P)H dehydrogenase (quinone) family. KefG subfamily.</text>
</comment>
<organism>
    <name type="scientific">Salmonella choleraesuis (strain SC-B67)</name>
    <dbReference type="NCBI Taxonomy" id="321314"/>
    <lineage>
        <taxon>Bacteria</taxon>
        <taxon>Pseudomonadati</taxon>
        <taxon>Pseudomonadota</taxon>
        <taxon>Gammaproteobacteria</taxon>
        <taxon>Enterobacterales</taxon>
        <taxon>Enterobacteriaceae</taxon>
        <taxon>Salmonella</taxon>
    </lineage>
</organism>
<proteinExistence type="inferred from homology"/>
<accession>Q57J14</accession>